<accession>Q58261</accession>
<sequence length="241" mass="25880">MANKREPAPGWPIVSGEYVVGNPESCVGVVTLGSHGLEQACIDAGAAIAGPCHTENLGIEKVVANYISNPNIRFMILCGSEVQGHITGQCFKALWENGIGDDGGIIGAKGAIPFLENVNKEAVERFRRQIVEVVDLIDCEDIGKITQAIKECLSKDPGAIDEDPFIIELEGGKGGGEEEEGVIKPITPEMAIIESRMRLIGNEMCYNGLLAKWQAGYYNGKIQGIATGLFLMLLIMGILMF</sequence>
<feature type="chain" id="PRO_0000147503" description="Tetrahydromethanopterin S-methyltransferase subunit A">
    <location>
        <begin position="1"/>
        <end position="241"/>
    </location>
</feature>
<feature type="topological domain" description="Cytoplasmic" evidence="1">
    <location>
        <begin position="1"/>
        <end position="220"/>
    </location>
</feature>
<feature type="transmembrane region" description="Helical" evidence="1">
    <location>
        <begin position="221"/>
        <end position="241"/>
    </location>
</feature>
<feature type="binding site" evidence="1">
    <location>
        <position position="85"/>
    </location>
    <ligand>
        <name>5-hydroxybenzimidazolylcob(I)amide</name>
        <dbReference type="ChEBI" id="CHEBI:60494"/>
        <note>cofactor</note>
    </ligand>
</feature>
<feature type="strand" evidence="3">
    <location>
        <begin position="26"/>
        <end position="30"/>
    </location>
</feature>
<feature type="helix" evidence="3">
    <location>
        <begin position="38"/>
        <end position="43"/>
    </location>
</feature>
<feature type="strand" evidence="3">
    <location>
        <begin position="47"/>
        <end position="50"/>
    </location>
</feature>
<feature type="helix" evidence="3">
    <location>
        <begin position="57"/>
        <end position="67"/>
    </location>
</feature>
<feature type="strand" evidence="3">
    <location>
        <begin position="74"/>
        <end position="79"/>
    </location>
</feature>
<feature type="turn" evidence="3">
    <location>
        <begin position="83"/>
        <end position="85"/>
    </location>
</feature>
<feature type="helix" evidence="3">
    <location>
        <begin position="87"/>
        <end position="97"/>
    </location>
</feature>
<feature type="strand" evidence="3">
    <location>
        <begin position="103"/>
        <end position="105"/>
    </location>
</feature>
<feature type="strand" evidence="3">
    <location>
        <begin position="110"/>
        <end position="112"/>
    </location>
</feature>
<feature type="strand" evidence="3">
    <location>
        <begin position="116"/>
        <end position="118"/>
    </location>
</feature>
<feature type="helix" evidence="3">
    <location>
        <begin position="120"/>
        <end position="129"/>
    </location>
</feature>
<feature type="strand" evidence="3">
    <location>
        <begin position="132"/>
        <end position="137"/>
    </location>
</feature>
<feature type="helix" evidence="3">
    <location>
        <begin position="142"/>
        <end position="154"/>
    </location>
</feature>
<feature type="turn" evidence="4">
    <location>
        <begin position="157"/>
        <end position="160"/>
    </location>
</feature>
<feature type="strand" evidence="4">
    <location>
        <begin position="165"/>
        <end position="168"/>
    </location>
</feature>
<evidence type="ECO:0000255" key="1">
    <source>
        <dbReference type="HAMAP-Rule" id="MF_01093"/>
    </source>
</evidence>
<evidence type="ECO:0000305" key="2"/>
<evidence type="ECO:0007829" key="3">
    <source>
        <dbReference type="PDB" id="5L8X"/>
    </source>
</evidence>
<evidence type="ECO:0007829" key="4">
    <source>
        <dbReference type="PDB" id="6ZW0"/>
    </source>
</evidence>
<comment type="function">
    <text evidence="1">Part of a complex that catalyzes the formation of methyl-coenzyme M and tetrahydromethanopterin from coenzyme M and methyl-tetrahydromethanopterin. This is an energy-conserving, sodium-ion translocating step.</text>
</comment>
<comment type="catalytic activity">
    <reaction evidence="1">
        <text>5-methyl-5,6,7,8-tetrahydromethanopterin + coenzyme M + 2 Na(+)(in) = 5,6,7,8-tetrahydromethanopterin + methyl-coenzyme M + 2 Na(+)(out)</text>
        <dbReference type="Rhea" id="RHEA:53492"/>
        <dbReference type="ChEBI" id="CHEBI:29101"/>
        <dbReference type="ChEBI" id="CHEBI:58103"/>
        <dbReference type="ChEBI" id="CHEBI:58116"/>
        <dbReference type="ChEBI" id="CHEBI:58286"/>
        <dbReference type="ChEBI" id="CHEBI:58319"/>
        <dbReference type="EC" id="7.2.1.4"/>
    </reaction>
</comment>
<comment type="cofactor">
    <cofactor evidence="1">
        <name>5-hydroxybenzimidazolylcob(I)amide</name>
        <dbReference type="ChEBI" id="CHEBI:60494"/>
    </cofactor>
    <text evidence="1">Binds 1 5-hydroxybenzimidazolylcobamide group.</text>
</comment>
<comment type="pathway">
    <text evidence="1">One-carbon metabolism; methanogenesis from CO(2); methyl-coenzyme M from 5,10-methylene-5,6,7,8-tetrahydromethanopterin: step 2/2.</text>
</comment>
<comment type="subunit">
    <text evidence="1">The complex is composed of 8 subunits; MtrA, MtrB, MtrC, MtrD, MtrE, MtrF, MtrG and MtrH.</text>
</comment>
<comment type="subcellular location">
    <subcellularLocation>
        <location evidence="1">Cell membrane</location>
        <topology evidence="1">Single-pass membrane protein</topology>
    </subcellularLocation>
</comment>
<comment type="similarity">
    <text evidence="1">Belongs to the MtrA family.</text>
</comment>
<comment type="sequence caution" evidence="2">
    <conflict type="erroneous initiation">
        <sequence resource="EMBL-CDS" id="AAB98856"/>
    </conflict>
    <text>Extended N-terminus.</text>
</comment>
<keyword id="KW-0002">3D-structure</keyword>
<keyword id="KW-1003">Cell membrane</keyword>
<keyword id="KW-0170">Cobalt</keyword>
<keyword id="KW-0472">Membrane</keyword>
<keyword id="KW-0484">Methanogenesis</keyword>
<keyword id="KW-0489">Methyltransferase</keyword>
<keyword id="KW-0554">One-carbon metabolism</keyword>
<keyword id="KW-1185">Reference proteome</keyword>
<keyword id="KW-0808">Transferase</keyword>
<keyword id="KW-1278">Translocase</keyword>
<keyword id="KW-0812">Transmembrane</keyword>
<keyword id="KW-1133">Transmembrane helix</keyword>
<protein>
    <recommendedName>
        <fullName evidence="1">Tetrahydromethanopterin S-methyltransferase subunit A</fullName>
        <ecNumber evidence="1">7.2.1.4</ecNumber>
    </recommendedName>
    <alternativeName>
        <fullName evidence="1">N5-methyltetrahydromethanopterin--coenzyme M methyltransferase subunit A</fullName>
    </alternativeName>
</protein>
<proteinExistence type="evidence at protein level"/>
<reference key="1">
    <citation type="journal article" date="1996" name="Science">
        <title>Complete genome sequence of the methanogenic archaeon, Methanococcus jannaschii.</title>
        <authorList>
            <person name="Bult C.J."/>
            <person name="White O."/>
            <person name="Olsen G.J."/>
            <person name="Zhou L."/>
            <person name="Fleischmann R.D."/>
            <person name="Sutton G.G."/>
            <person name="Blake J.A."/>
            <person name="FitzGerald L.M."/>
            <person name="Clayton R.A."/>
            <person name="Gocayne J.D."/>
            <person name="Kerlavage A.R."/>
            <person name="Dougherty B.A."/>
            <person name="Tomb J.-F."/>
            <person name="Adams M.D."/>
            <person name="Reich C.I."/>
            <person name="Overbeek R."/>
            <person name="Kirkness E.F."/>
            <person name="Weinstock K.G."/>
            <person name="Merrick J.M."/>
            <person name="Glodek A."/>
            <person name="Scott J.L."/>
            <person name="Geoghagen N.S.M."/>
            <person name="Weidman J.F."/>
            <person name="Fuhrmann J.L."/>
            <person name="Nguyen D."/>
            <person name="Utterback T.R."/>
            <person name="Kelley J.M."/>
            <person name="Peterson J.D."/>
            <person name="Sadow P.W."/>
            <person name="Hanna M.C."/>
            <person name="Cotton M.D."/>
            <person name="Roberts K.M."/>
            <person name="Hurst M.A."/>
            <person name="Kaine B.P."/>
            <person name="Borodovsky M."/>
            <person name="Klenk H.-P."/>
            <person name="Fraser C.M."/>
            <person name="Smith H.O."/>
            <person name="Woese C.R."/>
            <person name="Venter J.C."/>
        </authorList>
    </citation>
    <scope>NUCLEOTIDE SEQUENCE [LARGE SCALE GENOMIC DNA]</scope>
    <source>
        <strain>ATCC 43067 / DSM 2661 / JAL-1 / JCM 10045 / NBRC 100440</strain>
    </source>
</reference>
<name>MTRA_METJA</name>
<dbReference type="EC" id="7.2.1.4" evidence="1"/>
<dbReference type="EMBL" id="L77117">
    <property type="protein sequence ID" value="AAB98856.1"/>
    <property type="status" value="ALT_INIT"/>
    <property type="molecule type" value="Genomic_DNA"/>
</dbReference>
<dbReference type="PIR" id="C64406">
    <property type="entry name" value="C64406"/>
</dbReference>
<dbReference type="RefSeq" id="WP_064496640.1">
    <property type="nucleotide sequence ID" value="NC_000909.1"/>
</dbReference>
<dbReference type="PDB" id="5L8X">
    <property type="method" value="X-ray"/>
    <property type="resolution" value="1.85 A"/>
    <property type="chains" value="A/B=1-170"/>
</dbReference>
<dbReference type="PDB" id="6ZW0">
    <property type="method" value="X-ray"/>
    <property type="resolution" value="3.05 A"/>
    <property type="chains" value="C/D=140-169"/>
</dbReference>
<dbReference type="PDBsum" id="5L8X"/>
<dbReference type="PDBsum" id="6ZW0"/>
<dbReference type="SMR" id="Q58261"/>
<dbReference type="FunCoup" id="Q58261">
    <property type="interactions" value="93"/>
</dbReference>
<dbReference type="IntAct" id="Q58261">
    <property type="interactions" value="2"/>
</dbReference>
<dbReference type="MINT" id="Q58261"/>
<dbReference type="STRING" id="243232.MJ_0851"/>
<dbReference type="PaxDb" id="243232-MJ_0851"/>
<dbReference type="DNASU" id="1451739"/>
<dbReference type="EnsemblBacteria" id="AAB98856">
    <property type="protein sequence ID" value="AAB98856"/>
    <property type="gene ID" value="MJ_0851"/>
</dbReference>
<dbReference type="GeneID" id="1451739"/>
<dbReference type="KEGG" id="mja:MJ_0851"/>
<dbReference type="eggNOG" id="arCOG03221">
    <property type="taxonomic scope" value="Archaea"/>
</dbReference>
<dbReference type="HOGENOM" id="CLU_100863_0_0_2"/>
<dbReference type="InParanoid" id="Q58261"/>
<dbReference type="OrthoDB" id="130682at2157"/>
<dbReference type="PhylomeDB" id="Q58261"/>
<dbReference type="UniPathway" id="UPA00640">
    <property type="reaction ID" value="UER00698"/>
</dbReference>
<dbReference type="Proteomes" id="UP000000805">
    <property type="component" value="Chromosome"/>
</dbReference>
<dbReference type="GO" id="GO:0005886">
    <property type="term" value="C:plasma membrane"/>
    <property type="evidence" value="ECO:0007669"/>
    <property type="project" value="UniProtKB-SubCell"/>
</dbReference>
<dbReference type="GO" id="GO:0050897">
    <property type="term" value="F:cobalt ion binding"/>
    <property type="evidence" value="ECO:0007669"/>
    <property type="project" value="InterPro"/>
</dbReference>
<dbReference type="GO" id="GO:0030269">
    <property type="term" value="F:tetrahydromethanopterin S-methyltransferase activity"/>
    <property type="evidence" value="ECO:0007669"/>
    <property type="project" value="UniProtKB-UniRule"/>
</dbReference>
<dbReference type="GO" id="GO:0019386">
    <property type="term" value="P:methanogenesis, from carbon dioxide"/>
    <property type="evidence" value="ECO:0007669"/>
    <property type="project" value="UniProtKB-UniRule"/>
</dbReference>
<dbReference type="GO" id="GO:0032259">
    <property type="term" value="P:methylation"/>
    <property type="evidence" value="ECO:0007669"/>
    <property type="project" value="UniProtKB-KW"/>
</dbReference>
<dbReference type="GO" id="GO:0006730">
    <property type="term" value="P:one-carbon metabolic process"/>
    <property type="evidence" value="ECO:0007669"/>
    <property type="project" value="UniProtKB-UniRule"/>
</dbReference>
<dbReference type="HAMAP" id="MF_01093">
    <property type="entry name" value="MtrA"/>
    <property type="match status" value="1"/>
</dbReference>
<dbReference type="InterPro" id="IPR030688">
    <property type="entry name" value="MeTrfase_MtrA/MtxA"/>
</dbReference>
<dbReference type="InterPro" id="IPR005778">
    <property type="entry name" value="MtrA"/>
</dbReference>
<dbReference type="NCBIfam" id="TIGR01111">
    <property type="entry name" value="mtrA"/>
    <property type="match status" value="1"/>
</dbReference>
<dbReference type="NCBIfam" id="NF002126">
    <property type="entry name" value="PRK00964.1-4"/>
    <property type="match status" value="1"/>
</dbReference>
<dbReference type="Pfam" id="PF04208">
    <property type="entry name" value="MtrA"/>
    <property type="match status" value="1"/>
</dbReference>
<dbReference type="PIRSF" id="PIRSF500207">
    <property type="entry name" value="MtrA"/>
    <property type="match status" value="1"/>
</dbReference>
<dbReference type="PIRSF" id="PIRSF009452">
    <property type="entry name" value="MtrA_MtxA"/>
    <property type="match status" value="1"/>
</dbReference>
<organism>
    <name type="scientific">Methanocaldococcus jannaschii (strain ATCC 43067 / DSM 2661 / JAL-1 / JCM 10045 / NBRC 100440)</name>
    <name type="common">Methanococcus jannaschii</name>
    <dbReference type="NCBI Taxonomy" id="243232"/>
    <lineage>
        <taxon>Archaea</taxon>
        <taxon>Methanobacteriati</taxon>
        <taxon>Methanobacteriota</taxon>
        <taxon>Methanomada group</taxon>
        <taxon>Methanococci</taxon>
        <taxon>Methanococcales</taxon>
        <taxon>Methanocaldococcaceae</taxon>
        <taxon>Methanocaldococcus</taxon>
    </lineage>
</organism>
<gene>
    <name evidence="1" type="primary">mtrA</name>
    <name type="ordered locus">MJ0851</name>
</gene>